<feature type="signal peptide" evidence="2">
    <location>
        <begin position="1"/>
        <end position="26"/>
    </location>
</feature>
<feature type="chain" id="PRO_0000302049" description="LEAF RUST 10 DISEASE-RESISTANCE LOCUS RECEPTOR-LIKE PROTEIN KINASE-like 1.2">
    <location>
        <begin position="27"/>
        <end position="651"/>
    </location>
</feature>
<feature type="topological domain" description="Extracellular" evidence="9">
    <location>
        <begin position="27"/>
        <end position="264"/>
    </location>
</feature>
<feature type="transmembrane region" description="Helical" evidence="2">
    <location>
        <begin position="265"/>
        <end position="285"/>
    </location>
</feature>
<feature type="topological domain" description="Cytoplasmic" evidence="9">
    <location>
        <begin position="286"/>
        <end position="651"/>
    </location>
</feature>
<feature type="domain" description="Protein kinase" evidence="3">
    <location>
        <begin position="341"/>
        <end position="613"/>
    </location>
</feature>
<feature type="active site" description="Proton acceptor" evidence="3 4">
    <location>
        <position position="465"/>
    </location>
</feature>
<feature type="binding site" evidence="3">
    <location>
        <begin position="347"/>
        <end position="355"/>
    </location>
    <ligand>
        <name>ATP</name>
        <dbReference type="ChEBI" id="CHEBI:30616"/>
    </ligand>
</feature>
<feature type="binding site" evidence="3">
    <location>
        <position position="369"/>
    </location>
    <ligand>
        <name>ATP</name>
        <dbReference type="ChEBI" id="CHEBI:30616"/>
    </ligand>
</feature>
<feature type="modified residue" description="Phosphotyrosine" evidence="1">
    <location>
        <position position="415"/>
    </location>
</feature>
<feature type="modified residue" description="Phosphoserine" evidence="1">
    <location>
        <position position="498"/>
    </location>
</feature>
<feature type="modified residue" description="Phosphothreonine" evidence="1">
    <location>
        <position position="499"/>
    </location>
</feature>
<feature type="modified residue" description="Phosphothreonine" evidence="1">
    <location>
        <position position="504"/>
    </location>
</feature>
<feature type="modified residue" description="Phosphotyrosine" evidence="1">
    <location>
        <position position="512"/>
    </location>
</feature>
<feature type="glycosylation site" description="N-linked (GlcNAc...) asparagine" evidence="2">
    <location>
        <position position="88"/>
    </location>
</feature>
<feature type="glycosylation site" description="N-linked (GlcNAc...) asparagine" evidence="2">
    <location>
        <position position="114"/>
    </location>
</feature>
<feature type="glycosylation site" description="N-linked (GlcNAc...) asparagine" evidence="2">
    <location>
        <position position="130"/>
    </location>
</feature>
<feature type="glycosylation site" description="N-linked (GlcNAc...) asparagine" evidence="2">
    <location>
        <position position="136"/>
    </location>
</feature>
<feature type="glycosylation site" description="N-linked (GlcNAc...) asparagine" evidence="2">
    <location>
        <position position="155"/>
    </location>
</feature>
<feature type="glycosylation site" description="N-linked (GlcNAc...) asparagine" evidence="2">
    <location>
        <position position="193"/>
    </location>
</feature>
<feature type="glycosylation site" description="N-linked (GlcNAc...) asparagine" evidence="2">
    <location>
        <position position="213"/>
    </location>
</feature>
<feature type="splice variant" id="VSP_058186" description="In isoform 2 and isoform 3.">
    <original>MNPSTPSLLYTSIFFYFTIIATQTLSLDPKFKACEPKSCGKGPQISYPFYLSGKQESFCGYPSFELTCDDEEKLPVLGISGEEYVIKNISYLTQSFQVVNSKASHDPCPRPLNNLTLHRTPFFVNPSHINFTILYNCSDHLLEDFRTYPLTCARNTSLLRSFGVFDRKKLGKEKQIASMSCQKLVDVPVLASNESDVMGMTYVEILKRGFVLNWTANSCFRCITSGGRCGTDQQEFVCLCPDGPKLHDTCTNG</original>
    <variation>MSIFFFFISFVVFSVADLPSCFSADQQYEECRSRNLTCGSGHRVFESTTYPFWGGFNKPKFCGHSSFKLSCEGDQNLTLAIGNITLRVVSANLEDHKISVADDSLLDGGCLNIWNFNGKNQFTLDSNTETIDVFVNCSGVAPLQISCEESYEDPVTYHVLRSSDSDEGCMKYAEIPMLRSAKDELQRSELTFVEALRKGFDLRYIMEDKACRRCIDSGGICGSALDSESFRCLCADRPHNSSCDDNTNQG</variation>
    <location>
        <begin position="1"/>
        <end position="253"/>
    </location>
</feature>
<feature type="splice variant" id="VSP_058185" description="In isoform 3.">
    <location>
        <begin position="254"/>
        <end position="651"/>
    </location>
</feature>
<organism>
    <name type="scientific">Arabidopsis thaliana</name>
    <name type="common">Mouse-ear cress</name>
    <dbReference type="NCBI Taxonomy" id="3702"/>
    <lineage>
        <taxon>Eukaryota</taxon>
        <taxon>Viridiplantae</taxon>
        <taxon>Streptophyta</taxon>
        <taxon>Embryophyta</taxon>
        <taxon>Tracheophyta</taxon>
        <taxon>Spermatophyta</taxon>
        <taxon>Magnoliopsida</taxon>
        <taxon>eudicotyledons</taxon>
        <taxon>Gunneridae</taxon>
        <taxon>Pentapetalae</taxon>
        <taxon>rosids</taxon>
        <taxon>malvids</taxon>
        <taxon>Brassicales</taxon>
        <taxon>Brassicaceae</taxon>
        <taxon>Camelineae</taxon>
        <taxon>Arabidopsis</taxon>
    </lineage>
</organism>
<proteinExistence type="evidence at transcript level"/>
<gene>
    <name evidence="7" type="primary">LRK10L-1.2</name>
    <name evidence="8" type="synonym">LRK10L1</name>
    <name evidence="10" type="ordered locus">At1g18390</name>
    <name evidence="11" type="ORF">F15H18.11</name>
    <name evidence="11" type="ORF">F15H18.25</name>
</gene>
<dbReference type="EC" id="2.7.11.1"/>
<dbReference type="EMBL" id="AC013354">
    <property type="protein sequence ID" value="AAF25996.1"/>
    <property type="status" value="ALT_SEQ"/>
    <property type="molecule type" value="Genomic_DNA"/>
</dbReference>
<dbReference type="EMBL" id="CP002684">
    <property type="protein sequence ID" value="AEE29709.1"/>
    <property type="molecule type" value="Genomic_DNA"/>
</dbReference>
<dbReference type="EMBL" id="CP002684">
    <property type="protein sequence ID" value="AEE29710.1"/>
    <property type="status" value="ALT_SEQ"/>
    <property type="molecule type" value="Genomic_DNA"/>
</dbReference>
<dbReference type="EMBL" id="AY924673">
    <property type="protein sequence ID" value="AAX23748.1"/>
    <property type="status" value="ALT_SEQ"/>
    <property type="molecule type" value="Genomic_DNA"/>
</dbReference>
<dbReference type="EMBL" id="AY090931">
    <property type="protein sequence ID" value="AAM13983.1"/>
    <property type="status" value="ALT_SEQ"/>
    <property type="molecule type" value="mRNA"/>
</dbReference>
<dbReference type="EMBL" id="AY800585">
    <property type="protein sequence ID" value="AAV68821.1"/>
    <property type="molecule type" value="mRNA"/>
</dbReference>
<dbReference type="PIR" id="A86318">
    <property type="entry name" value="A86318"/>
</dbReference>
<dbReference type="RefSeq" id="NP_001154349.1">
    <property type="nucleotide sequence ID" value="NM_001160877.1"/>
</dbReference>
<dbReference type="RefSeq" id="NP_173275.4">
    <molecule id="P0C5E2-2"/>
    <property type="nucleotide sequence ID" value="NM_101697.6"/>
</dbReference>
<dbReference type="SMR" id="P0C5E2"/>
<dbReference type="FunCoup" id="P0C5E2">
    <property type="interactions" value="36"/>
</dbReference>
<dbReference type="STRING" id="3702.P0C5E2"/>
<dbReference type="GlyCosmos" id="P0C5E2">
    <property type="glycosylation" value="7 sites, No reported glycans"/>
</dbReference>
<dbReference type="GlyGen" id="P0C5E2">
    <property type="glycosylation" value="8 sites"/>
</dbReference>
<dbReference type="iPTMnet" id="P0C5E2"/>
<dbReference type="PaxDb" id="3702-AT1G18390.2"/>
<dbReference type="ProteomicsDB" id="238527">
    <molecule id="P0C5E2-1"/>
</dbReference>
<dbReference type="EnsemblPlants" id="AT1G18390.1">
    <molecule id="P0C5E2-2"/>
    <property type="protein sequence ID" value="AT1G18390.1"/>
    <property type="gene ID" value="AT1G18390"/>
</dbReference>
<dbReference type="GeneID" id="838420"/>
<dbReference type="Gramene" id="AT1G18390.1">
    <molecule id="P0C5E2-2"/>
    <property type="protein sequence ID" value="AT1G18390.1"/>
    <property type="gene ID" value="AT1G18390"/>
</dbReference>
<dbReference type="KEGG" id="ath:AT1G18390"/>
<dbReference type="Araport" id="AT1G18390"/>
<dbReference type="TAIR" id="AT1G18390">
    <property type="gene designation" value="LRK10L1.2"/>
</dbReference>
<dbReference type="eggNOG" id="KOG1187">
    <property type="taxonomic scope" value="Eukaryota"/>
</dbReference>
<dbReference type="HOGENOM" id="CLU_000288_115_3_1"/>
<dbReference type="InParanoid" id="P0C5E2"/>
<dbReference type="PRO" id="PR:P0C5E2"/>
<dbReference type="Proteomes" id="UP000006548">
    <property type="component" value="Chromosome 1"/>
</dbReference>
<dbReference type="ExpressionAtlas" id="P0C5E2">
    <property type="expression patterns" value="baseline and differential"/>
</dbReference>
<dbReference type="GO" id="GO:0005886">
    <property type="term" value="C:plasma membrane"/>
    <property type="evidence" value="ECO:0000314"/>
    <property type="project" value="UniProtKB"/>
</dbReference>
<dbReference type="GO" id="GO:0005524">
    <property type="term" value="F:ATP binding"/>
    <property type="evidence" value="ECO:0007669"/>
    <property type="project" value="UniProtKB-KW"/>
</dbReference>
<dbReference type="GO" id="GO:0030247">
    <property type="term" value="F:polysaccharide binding"/>
    <property type="evidence" value="ECO:0007669"/>
    <property type="project" value="InterPro"/>
</dbReference>
<dbReference type="GO" id="GO:0106310">
    <property type="term" value="F:protein serine kinase activity"/>
    <property type="evidence" value="ECO:0007669"/>
    <property type="project" value="RHEA"/>
</dbReference>
<dbReference type="GO" id="GO:0004674">
    <property type="term" value="F:protein serine/threonine kinase activity"/>
    <property type="evidence" value="ECO:0007669"/>
    <property type="project" value="UniProtKB-KW"/>
</dbReference>
<dbReference type="GO" id="GO:0071215">
    <property type="term" value="P:cellular response to abscisic acid stimulus"/>
    <property type="evidence" value="ECO:0000315"/>
    <property type="project" value="TAIR"/>
</dbReference>
<dbReference type="GO" id="GO:0042631">
    <property type="term" value="P:cellular response to water deprivation"/>
    <property type="evidence" value="ECO:0000315"/>
    <property type="project" value="TAIR"/>
</dbReference>
<dbReference type="GO" id="GO:0048573">
    <property type="term" value="P:photoperiodism, flowering"/>
    <property type="evidence" value="ECO:0000315"/>
    <property type="project" value="TAIR"/>
</dbReference>
<dbReference type="FunFam" id="3.30.200.20:FF:000214">
    <property type="entry name" value="WAK1-OsWAK receptor-like cytoplasmic kinase (OsWAK-RLCK)"/>
    <property type="match status" value="1"/>
</dbReference>
<dbReference type="FunFam" id="1.10.510.10:FF:000161">
    <property type="entry name" value="Wall-associated receptor kinase-like 20"/>
    <property type="match status" value="1"/>
</dbReference>
<dbReference type="Gene3D" id="3.30.200.20">
    <property type="entry name" value="Phosphorylase Kinase, domain 1"/>
    <property type="match status" value="1"/>
</dbReference>
<dbReference type="Gene3D" id="1.10.510.10">
    <property type="entry name" value="Transferase(Phosphotransferase) domain 1"/>
    <property type="match status" value="1"/>
</dbReference>
<dbReference type="InterPro" id="IPR011009">
    <property type="entry name" value="Kinase-like_dom_sf"/>
</dbReference>
<dbReference type="InterPro" id="IPR000719">
    <property type="entry name" value="Prot_kinase_dom"/>
</dbReference>
<dbReference type="InterPro" id="IPR017441">
    <property type="entry name" value="Protein_kinase_ATP_BS"/>
</dbReference>
<dbReference type="InterPro" id="IPR001245">
    <property type="entry name" value="Ser-Thr/Tyr_kinase_cat_dom"/>
</dbReference>
<dbReference type="InterPro" id="IPR008271">
    <property type="entry name" value="Ser/Thr_kinase_AS"/>
</dbReference>
<dbReference type="InterPro" id="IPR032872">
    <property type="entry name" value="WAK_assoc_C"/>
</dbReference>
<dbReference type="InterPro" id="IPR025287">
    <property type="entry name" value="WAK_GUB"/>
</dbReference>
<dbReference type="PANTHER" id="PTHR46008:SF4">
    <property type="entry name" value="LEAF RUST 10 DISEASE-RESISTANCE LOCUS RECEPTOR-LIKE PROTEIN KINASE-LIKE 1.2"/>
    <property type="match status" value="1"/>
</dbReference>
<dbReference type="PANTHER" id="PTHR46008">
    <property type="entry name" value="LEAF RUST 10 DISEASE-RESISTANCE LOCUS RECEPTOR-LIKE PROTEIN KINASE-LIKE 1.4"/>
    <property type="match status" value="1"/>
</dbReference>
<dbReference type="Pfam" id="PF13947">
    <property type="entry name" value="GUB_WAK_bind"/>
    <property type="match status" value="1"/>
</dbReference>
<dbReference type="Pfam" id="PF07714">
    <property type="entry name" value="PK_Tyr_Ser-Thr"/>
    <property type="match status" value="1"/>
</dbReference>
<dbReference type="Pfam" id="PF14380">
    <property type="entry name" value="WAK_assoc"/>
    <property type="match status" value="1"/>
</dbReference>
<dbReference type="SMART" id="SM00220">
    <property type="entry name" value="S_TKc"/>
    <property type="match status" value="1"/>
</dbReference>
<dbReference type="SUPFAM" id="SSF56112">
    <property type="entry name" value="Protein kinase-like (PK-like)"/>
    <property type="match status" value="1"/>
</dbReference>
<dbReference type="PROSITE" id="PS00107">
    <property type="entry name" value="PROTEIN_KINASE_ATP"/>
    <property type="match status" value="1"/>
</dbReference>
<dbReference type="PROSITE" id="PS50011">
    <property type="entry name" value="PROTEIN_KINASE_DOM"/>
    <property type="match status" value="1"/>
</dbReference>
<dbReference type="PROSITE" id="PS00108">
    <property type="entry name" value="PROTEIN_KINASE_ST"/>
    <property type="match status" value="1"/>
</dbReference>
<protein>
    <recommendedName>
        <fullName evidence="7">LEAF RUST 10 DISEASE-RESISTANCE LOCUS RECEPTOR-LIKE PROTEIN KINASE-like 1.2</fullName>
        <ecNumber>2.7.11.1</ecNumber>
    </recommendedName>
    <alternativeName>
        <fullName evidence="9">Probable receptor-like serine/threonine-protein kinase LRK10L-1.2</fullName>
    </alternativeName>
</protein>
<accession>P0C5E2</accession>
<accession>F4IAQ9</accession>
<accession>Q5BQ05</accession>
<accession>Q5Q0G6</accession>
<accession>Q8RX30</accession>
<accession>Q9LPQ6</accession>
<name>LRL12_ARATH</name>
<evidence type="ECO:0000250" key="1">
    <source>
        <dbReference type="UniProtKB" id="O48814"/>
    </source>
</evidence>
<evidence type="ECO:0000255" key="2"/>
<evidence type="ECO:0000255" key="3">
    <source>
        <dbReference type="PROSITE-ProRule" id="PRU00159"/>
    </source>
</evidence>
<evidence type="ECO:0000255" key="4">
    <source>
        <dbReference type="PROSITE-ProRule" id="PRU10027"/>
    </source>
</evidence>
<evidence type="ECO:0000269" key="5">
    <source>
    </source>
</evidence>
<evidence type="ECO:0000269" key="6">
    <source>
    </source>
</evidence>
<evidence type="ECO:0000303" key="7">
    <source>
    </source>
</evidence>
<evidence type="ECO:0000303" key="8">
    <source>
    </source>
</evidence>
<evidence type="ECO:0000305" key="9"/>
<evidence type="ECO:0000312" key="10">
    <source>
        <dbReference type="Araport" id="AT1G18390"/>
    </source>
</evidence>
<evidence type="ECO:0000312" key="11">
    <source>
        <dbReference type="EMBL" id="AAF25996.1"/>
    </source>
</evidence>
<keyword id="KW-0877">Alternative promoter usage</keyword>
<keyword id="KW-0025">Alternative splicing</keyword>
<keyword id="KW-0067">ATP-binding</keyword>
<keyword id="KW-1003">Cell membrane</keyword>
<keyword id="KW-0325">Glycoprotein</keyword>
<keyword id="KW-0418">Kinase</keyword>
<keyword id="KW-0472">Membrane</keyword>
<keyword id="KW-0547">Nucleotide-binding</keyword>
<keyword id="KW-0597">Phosphoprotein</keyword>
<keyword id="KW-0675">Receptor</keyword>
<keyword id="KW-1185">Reference proteome</keyword>
<keyword id="KW-0723">Serine/threonine-protein kinase</keyword>
<keyword id="KW-0732">Signal</keyword>
<keyword id="KW-0808">Transferase</keyword>
<keyword id="KW-0812">Transmembrane</keyword>
<keyword id="KW-1133">Transmembrane helix</keyword>
<reference key="1">
    <citation type="journal article" date="2000" name="Nature">
        <title>Sequence and analysis of chromosome 1 of the plant Arabidopsis thaliana.</title>
        <authorList>
            <person name="Theologis A."/>
            <person name="Ecker J.R."/>
            <person name="Palm C.J."/>
            <person name="Federspiel N.A."/>
            <person name="Kaul S."/>
            <person name="White O."/>
            <person name="Alonso J."/>
            <person name="Altafi H."/>
            <person name="Araujo R."/>
            <person name="Bowman C.L."/>
            <person name="Brooks S.Y."/>
            <person name="Buehler E."/>
            <person name="Chan A."/>
            <person name="Chao Q."/>
            <person name="Chen H."/>
            <person name="Cheuk R.F."/>
            <person name="Chin C.W."/>
            <person name="Chung M.K."/>
            <person name="Conn L."/>
            <person name="Conway A.B."/>
            <person name="Conway A.R."/>
            <person name="Creasy T.H."/>
            <person name="Dewar K."/>
            <person name="Dunn P."/>
            <person name="Etgu P."/>
            <person name="Feldblyum T.V."/>
            <person name="Feng J.-D."/>
            <person name="Fong B."/>
            <person name="Fujii C.Y."/>
            <person name="Gill J.E."/>
            <person name="Goldsmith A.D."/>
            <person name="Haas B."/>
            <person name="Hansen N.F."/>
            <person name="Hughes B."/>
            <person name="Huizar L."/>
            <person name="Hunter J.L."/>
            <person name="Jenkins J."/>
            <person name="Johnson-Hopson C."/>
            <person name="Khan S."/>
            <person name="Khaykin E."/>
            <person name="Kim C.J."/>
            <person name="Koo H.L."/>
            <person name="Kremenetskaia I."/>
            <person name="Kurtz D.B."/>
            <person name="Kwan A."/>
            <person name="Lam B."/>
            <person name="Langin-Hooper S."/>
            <person name="Lee A."/>
            <person name="Lee J.M."/>
            <person name="Lenz C.A."/>
            <person name="Li J.H."/>
            <person name="Li Y.-P."/>
            <person name="Lin X."/>
            <person name="Liu S.X."/>
            <person name="Liu Z.A."/>
            <person name="Luros J.S."/>
            <person name="Maiti R."/>
            <person name="Marziali A."/>
            <person name="Militscher J."/>
            <person name="Miranda M."/>
            <person name="Nguyen M."/>
            <person name="Nierman W.C."/>
            <person name="Osborne B.I."/>
            <person name="Pai G."/>
            <person name="Peterson J."/>
            <person name="Pham P.K."/>
            <person name="Rizzo M."/>
            <person name="Rooney T."/>
            <person name="Rowley D."/>
            <person name="Sakano H."/>
            <person name="Salzberg S.L."/>
            <person name="Schwartz J.R."/>
            <person name="Shinn P."/>
            <person name="Southwick A.M."/>
            <person name="Sun H."/>
            <person name="Tallon L.J."/>
            <person name="Tambunga G."/>
            <person name="Toriumi M.J."/>
            <person name="Town C.D."/>
            <person name="Utterback T."/>
            <person name="Van Aken S."/>
            <person name="Vaysberg M."/>
            <person name="Vysotskaia V.S."/>
            <person name="Walker M."/>
            <person name="Wu D."/>
            <person name="Yu G."/>
            <person name="Fraser C.M."/>
            <person name="Venter J.C."/>
            <person name="Davis R.W."/>
        </authorList>
    </citation>
    <scope>NUCLEOTIDE SEQUENCE [LARGE SCALE GENOMIC DNA]</scope>
    <source>
        <strain>cv. Columbia</strain>
    </source>
</reference>
<reference key="2">
    <citation type="journal article" date="2017" name="Plant J.">
        <title>Araport11: a complete reannotation of the Arabidopsis thaliana reference genome.</title>
        <authorList>
            <person name="Cheng C.Y."/>
            <person name="Krishnakumar V."/>
            <person name="Chan A.P."/>
            <person name="Thibaud-Nissen F."/>
            <person name="Schobel S."/>
            <person name="Town C.D."/>
        </authorList>
    </citation>
    <scope>GENOME REANNOTATION</scope>
    <source>
        <strain>cv. Columbia</strain>
    </source>
</reference>
<reference key="3">
    <citation type="submission" date="2005-02" db="EMBL/GenBank/DDBJ databases">
        <authorList>
            <person name="Underwood B.A."/>
            <person name="Xiao Y.-L."/>
            <person name="Moskal W.A. Jr."/>
            <person name="Monaghan E.L."/>
            <person name="Wang W."/>
            <person name="Redman J.C."/>
            <person name="Wu H.C."/>
            <person name="Utterback T."/>
            <person name="Town C.D."/>
        </authorList>
    </citation>
    <scope>NUCLEOTIDE SEQUENCE [LARGE SCALE GENOMIC DNA]</scope>
    <source>
        <strain>cv. Columbia</strain>
    </source>
</reference>
<reference key="4">
    <citation type="journal article" date="2003" name="Science">
        <title>Empirical analysis of transcriptional activity in the Arabidopsis genome.</title>
        <authorList>
            <person name="Yamada K."/>
            <person name="Lim J."/>
            <person name="Dale J.M."/>
            <person name="Chen H."/>
            <person name="Shinn P."/>
            <person name="Palm C.J."/>
            <person name="Southwick A.M."/>
            <person name="Wu H.C."/>
            <person name="Kim C.J."/>
            <person name="Nguyen M."/>
            <person name="Pham P.K."/>
            <person name="Cheuk R.F."/>
            <person name="Karlin-Newmann G."/>
            <person name="Liu S.X."/>
            <person name="Lam B."/>
            <person name="Sakano H."/>
            <person name="Wu T."/>
            <person name="Yu G."/>
            <person name="Miranda M."/>
            <person name="Quach H.L."/>
            <person name="Tripp M."/>
            <person name="Chang C.H."/>
            <person name="Lee J.M."/>
            <person name="Toriumi M.J."/>
            <person name="Chan M.M."/>
            <person name="Tang C.C."/>
            <person name="Onodera C.S."/>
            <person name="Deng J.M."/>
            <person name="Akiyama K."/>
            <person name="Ansari Y."/>
            <person name="Arakawa T."/>
            <person name="Banh J."/>
            <person name="Banno F."/>
            <person name="Bowser L."/>
            <person name="Brooks S.Y."/>
            <person name="Carninci P."/>
            <person name="Chao Q."/>
            <person name="Choy N."/>
            <person name="Enju A."/>
            <person name="Goldsmith A.D."/>
            <person name="Gurjal M."/>
            <person name="Hansen N.F."/>
            <person name="Hayashizaki Y."/>
            <person name="Johnson-Hopson C."/>
            <person name="Hsuan V.W."/>
            <person name="Iida K."/>
            <person name="Karnes M."/>
            <person name="Khan S."/>
            <person name="Koesema E."/>
            <person name="Ishida J."/>
            <person name="Jiang P.X."/>
            <person name="Jones T."/>
            <person name="Kawai J."/>
            <person name="Kamiya A."/>
            <person name="Meyers C."/>
            <person name="Nakajima M."/>
            <person name="Narusaka M."/>
            <person name="Seki M."/>
            <person name="Sakurai T."/>
            <person name="Satou M."/>
            <person name="Tamse R."/>
            <person name="Vaysberg M."/>
            <person name="Wallender E.K."/>
            <person name="Wong C."/>
            <person name="Yamamura Y."/>
            <person name="Yuan S."/>
            <person name="Shinozaki K."/>
            <person name="Davis R.W."/>
            <person name="Theologis A."/>
            <person name="Ecker J.R."/>
        </authorList>
    </citation>
    <scope>PARTIAL NUCLEOTIDE SEQUENCE [LARGE SCALE MRNA] (ISOFORM 2)</scope>
    <source>
        <strain>cv. Columbia</strain>
    </source>
</reference>
<reference key="5">
    <citation type="submission" date="2004-10" db="EMBL/GenBank/DDBJ databases">
        <title>Reconstruction of cDNA sequences for hypothetical genes in Arabidopsis thaliana from 5' and 3' RACE products.</title>
        <authorList>
            <person name="Xiao Y.-L."/>
            <person name="Underwood B.A."/>
            <person name="Moskal W.A. Jr."/>
            <person name="Wang W."/>
            <person name="Redman J.C."/>
            <person name="Wu H.C."/>
            <person name="Utterback T."/>
            <person name="Town C.D."/>
        </authorList>
    </citation>
    <scope>NUCLEOTIDE SEQUENCE [LARGE SCALE MRNA] (ISOFORM 3)</scope>
</reference>
<reference key="6">
    <citation type="journal article" date="2001" name="Proc. Natl. Acad. Sci. U.S.A.">
        <title>Receptor-like kinases from Arabidopsis form a monophyletic gene family related to animal receptor kinases.</title>
        <authorList>
            <person name="Shiu S.H."/>
            <person name="Bleecker A.B."/>
        </authorList>
    </citation>
    <scope>GENE FAMILY</scope>
</reference>
<reference key="7">
    <citation type="journal article" date="2003" name="Plant Physiol.">
        <title>Expansion of the receptor-like kinase/Pelle gene family and receptor-like proteins in Arabidopsis.</title>
        <authorList>
            <person name="Shiu S.H."/>
            <person name="Bleecker A.B."/>
        </authorList>
    </citation>
    <scope>GENE FAMILY</scope>
</reference>
<reference key="8">
    <citation type="journal article" date="2015" name="Plant Cell Rep.">
        <title>The AtLRK10L1.2, Arabidopsis ortholog of wheat LRK10, is involved in ABA-mediated signaling and drought resistance.</title>
        <authorList>
            <person name="Lim C.W."/>
            <person name="Yang S.H."/>
            <person name="Shin K.H."/>
            <person name="Lee S.C."/>
            <person name="Kim S.H."/>
        </authorList>
    </citation>
    <scope>DISRUPTION PHENOTYPE</scope>
    <scope>FUNCTION</scope>
</reference>
<reference key="9">
    <citation type="journal article" date="2015" name="Plant Cell Rep.">
        <title>Alternative splicing of mini-exons in the Arabidopsis leaf rust receptor-like kinase LRK10 genes affects subcellular localisation.</title>
        <authorList>
            <person name="Shin K.H."/>
            <person name="Yang S.H."/>
            <person name="Lee J.Y."/>
            <person name="Lim C.W."/>
            <person name="Lee S.C."/>
            <person name="Brown J.W."/>
            <person name="Kim S.H."/>
        </authorList>
    </citation>
    <scope>ALTERNATIVE PROMOTER USAGE</scope>
    <scope>ALTERNATIVE SPLICING</scope>
    <scope>SUBCELLULAR LOCATION</scope>
</reference>
<comment type="function">
    <text evidence="6">Probable receptor-like serine/threonine-protein kinase involved in abscisic acid (ABA) signaling. Acts as a positive regulator of abiotic stress response.</text>
</comment>
<comment type="catalytic activity">
    <reaction>
        <text>L-seryl-[protein] + ATP = O-phospho-L-seryl-[protein] + ADP + H(+)</text>
        <dbReference type="Rhea" id="RHEA:17989"/>
        <dbReference type="Rhea" id="RHEA-COMP:9863"/>
        <dbReference type="Rhea" id="RHEA-COMP:11604"/>
        <dbReference type="ChEBI" id="CHEBI:15378"/>
        <dbReference type="ChEBI" id="CHEBI:29999"/>
        <dbReference type="ChEBI" id="CHEBI:30616"/>
        <dbReference type="ChEBI" id="CHEBI:83421"/>
        <dbReference type="ChEBI" id="CHEBI:456216"/>
        <dbReference type="EC" id="2.7.11.1"/>
    </reaction>
</comment>
<comment type="catalytic activity">
    <reaction>
        <text>L-threonyl-[protein] + ATP = O-phospho-L-threonyl-[protein] + ADP + H(+)</text>
        <dbReference type="Rhea" id="RHEA:46608"/>
        <dbReference type="Rhea" id="RHEA-COMP:11060"/>
        <dbReference type="Rhea" id="RHEA-COMP:11605"/>
        <dbReference type="ChEBI" id="CHEBI:15378"/>
        <dbReference type="ChEBI" id="CHEBI:30013"/>
        <dbReference type="ChEBI" id="CHEBI:30616"/>
        <dbReference type="ChEBI" id="CHEBI:61977"/>
        <dbReference type="ChEBI" id="CHEBI:456216"/>
        <dbReference type="EC" id="2.7.11.1"/>
    </reaction>
</comment>
<comment type="subcellular location">
    <molecule>Isoform 1</molecule>
    <subcellularLocation>
        <location evidence="5">Cell membrane</location>
        <topology evidence="9">Single-pass type I membrane protein</topology>
    </subcellularLocation>
</comment>
<comment type="subcellular location">
    <molecule>Isoform 2</molecule>
    <subcellularLocation>
        <location evidence="2">Membrane</location>
        <topology evidence="9">Single-pass type I membrane protein</topology>
    </subcellularLocation>
</comment>
<comment type="alternative products">
    <event type="alternative promoter"/>
    <event type="alternative splicing"/>
    <isoform>
        <id>P0C5E2-1</id>
        <name>1</name>
        <name>AtLRK10L-1.2</name>
        <sequence type="displayed"/>
    </isoform>
    <isoform>
        <id>P0C5E2-2</id>
        <name>2</name>
        <name>AtLRK10L-1.1</name>
        <sequence type="described" ref="VSP_058186"/>
    </isoform>
    <isoform>
        <id>P0C5E2-3</id>
        <name>3</name>
        <sequence type="described" ref="VSP_058186 VSP_058185"/>
    </isoform>
    <text evidence="5">A number of isoforms are produced by alternative splicing of isoform 1.</text>
</comment>
<comment type="disruption phenotype">
    <text evidence="6">ABA-insensitive and drought stress-semsitive. Late flowering.</text>
</comment>
<comment type="miscellaneous">
    <molecule>Isoform 2</molecule>
    <text evidence="5">Produced by alternative promoter usage.</text>
</comment>
<comment type="miscellaneous">
    <molecule>Isoform 3</molecule>
    <text evidence="9">Produced by alternative splicing of isoform 2. May be due to an intron retention.</text>
</comment>
<comment type="similarity">
    <text evidence="3">Belongs to the protein kinase superfamily. Ser/Thr protein kinase family.</text>
</comment>
<comment type="sequence caution" evidence="9">
    <conflict type="erroneous gene model prediction">
        <sequence resource="EMBL-CDS" id="AAF25996"/>
    </conflict>
    <text>The predicted gene has been split into 2 genes: At1g18390 and At1g18400.</text>
</comment>
<comment type="sequence caution" evidence="9">
    <conflict type="miscellaneous discrepancy">
        <sequence resource="EMBL-CDS" id="AAM13983"/>
    </conflict>
    <text>Cloning artifact.</text>
</comment>
<comment type="sequence caution" evidence="9">
    <conflict type="erroneous gene model prediction">
        <sequence resource="EMBL-CDS" id="AAX23748"/>
    </conflict>
</comment>
<comment type="sequence caution" evidence="9">
    <conflict type="erroneous gene model prediction">
        <sequence resource="EMBL-CDS" id="AEE29710"/>
    </conflict>
</comment>
<sequence length="651" mass="72862">MNPSTPSLLYTSIFFYFTIIATQTLSLDPKFKACEPKSCGKGPQISYPFYLSGKQESFCGYPSFELTCDDEEKLPVLGISGEEYVIKNISYLTQSFQVVNSKASHDPCPRPLNNLTLHRTPFFVNPSHINFTILYNCSDHLLEDFRTYPLTCARNTSLLRSFGVFDRKKLGKEKQIASMSCQKLVDVPVLASNESDVMGMTYVEILKRGFVLNWTANSCFRCITSGGRCGTDQQEFVCLCPDGPKLHDTCTNGKNDKRRRVIVKVLIGASAAVVGLIAASIFWYVYHRRKTKSYRNSSALLPRNISSDPSAKSFDIEKAEELLVGVHIFSYEELEEATNNFDPSKELGDGGFGTVYYGKLKDGRSVAVKRLYDNNFKRAEQFRNEVEILTGLRHPNLVALFGCSSKQSRDLLLVYEYVANGTLADHLHGPQANPSSLPWSIRLKIAVETASALKYLHASKIIHRDVKSNNILLDQNFNVKVADFGLSRLFPMDKTHVSTAPQGTPGYVDPDYHLCYQLSNKSDVYSFAVVLMELISSLPAVDITRPRQEINLSNMAVVKIQNHELRDMVDPSLGFDTDTRVRQTVIAVAELAFQCLQSDKDLRPCMSHVQDTLTRIQNNGFGSEMDVVDVNKSGPLVAQSPDSVIVKWDSK</sequence>